<proteinExistence type="inferred from homology"/>
<dbReference type="EC" id="1.18.6.1" evidence="1"/>
<dbReference type="EMBL" id="BA000012">
    <property type="protein sequence ID" value="BAB52275.1"/>
    <property type="molecule type" value="Genomic_DNA"/>
</dbReference>
<dbReference type="RefSeq" id="WP_010913608.1">
    <property type="nucleotide sequence ID" value="NC_002678.2"/>
</dbReference>
<dbReference type="SMR" id="Q98AP7"/>
<dbReference type="GeneID" id="61055496"/>
<dbReference type="KEGG" id="mlo:mlr5905"/>
<dbReference type="eggNOG" id="COG1348">
    <property type="taxonomic scope" value="Bacteria"/>
</dbReference>
<dbReference type="HOGENOM" id="CLU_059373_0_0_5"/>
<dbReference type="Proteomes" id="UP000000552">
    <property type="component" value="Chromosome"/>
</dbReference>
<dbReference type="GO" id="GO:0051539">
    <property type="term" value="F:4 iron, 4 sulfur cluster binding"/>
    <property type="evidence" value="ECO:0007669"/>
    <property type="project" value="UniProtKB-KW"/>
</dbReference>
<dbReference type="GO" id="GO:0005524">
    <property type="term" value="F:ATP binding"/>
    <property type="evidence" value="ECO:0007669"/>
    <property type="project" value="UniProtKB-UniRule"/>
</dbReference>
<dbReference type="GO" id="GO:0046872">
    <property type="term" value="F:metal ion binding"/>
    <property type="evidence" value="ECO:0007669"/>
    <property type="project" value="UniProtKB-KW"/>
</dbReference>
<dbReference type="GO" id="GO:0016163">
    <property type="term" value="F:nitrogenase activity"/>
    <property type="evidence" value="ECO:0007669"/>
    <property type="project" value="UniProtKB-UniRule"/>
</dbReference>
<dbReference type="GO" id="GO:0009399">
    <property type="term" value="P:nitrogen fixation"/>
    <property type="evidence" value="ECO:0007669"/>
    <property type="project" value="UniProtKB-UniRule"/>
</dbReference>
<dbReference type="CDD" id="cd02040">
    <property type="entry name" value="NifH"/>
    <property type="match status" value="1"/>
</dbReference>
<dbReference type="FunFam" id="3.40.50.300:FF:001379">
    <property type="entry name" value="Nitrogenase iron protein 1"/>
    <property type="match status" value="1"/>
</dbReference>
<dbReference type="Gene3D" id="3.40.50.300">
    <property type="entry name" value="P-loop containing nucleotide triphosphate hydrolases"/>
    <property type="match status" value="1"/>
</dbReference>
<dbReference type="HAMAP" id="MF_00533">
    <property type="entry name" value="NifH"/>
    <property type="match status" value="1"/>
</dbReference>
<dbReference type="InterPro" id="IPR030655">
    <property type="entry name" value="NifH/chlL_CS"/>
</dbReference>
<dbReference type="InterPro" id="IPR000392">
    <property type="entry name" value="NifH/frxC"/>
</dbReference>
<dbReference type="InterPro" id="IPR005977">
    <property type="entry name" value="Nitrogenase_Fe_NifH"/>
</dbReference>
<dbReference type="InterPro" id="IPR027417">
    <property type="entry name" value="P-loop_NTPase"/>
</dbReference>
<dbReference type="NCBIfam" id="TIGR01287">
    <property type="entry name" value="nifH"/>
    <property type="match status" value="1"/>
</dbReference>
<dbReference type="PANTHER" id="PTHR42864">
    <property type="entry name" value="LIGHT-INDEPENDENT PROTOCHLOROPHYLLIDE REDUCTASE IRON-SULFUR ATP-BINDING PROTEIN"/>
    <property type="match status" value="1"/>
</dbReference>
<dbReference type="PANTHER" id="PTHR42864:SF2">
    <property type="entry name" value="LIGHT-INDEPENDENT PROTOCHLOROPHYLLIDE REDUCTASE IRON-SULFUR ATP-BINDING PROTEIN"/>
    <property type="match status" value="1"/>
</dbReference>
<dbReference type="Pfam" id="PF00142">
    <property type="entry name" value="Fer4_NifH"/>
    <property type="match status" value="1"/>
</dbReference>
<dbReference type="PIRSF" id="PIRSF000363">
    <property type="entry name" value="Nitrogenase_iron"/>
    <property type="match status" value="1"/>
</dbReference>
<dbReference type="PRINTS" id="PR00091">
    <property type="entry name" value="NITROGNASEII"/>
</dbReference>
<dbReference type="SUPFAM" id="SSF52540">
    <property type="entry name" value="P-loop containing nucleoside triphosphate hydrolases"/>
    <property type="match status" value="1"/>
</dbReference>
<dbReference type="PROSITE" id="PS00746">
    <property type="entry name" value="NIFH_FRXC_1"/>
    <property type="match status" value="1"/>
</dbReference>
<dbReference type="PROSITE" id="PS00692">
    <property type="entry name" value="NIFH_FRXC_2"/>
    <property type="match status" value="1"/>
</dbReference>
<dbReference type="PROSITE" id="PS51026">
    <property type="entry name" value="NIFH_FRXC_3"/>
    <property type="match status" value="1"/>
</dbReference>
<gene>
    <name evidence="1" type="primary">nifH</name>
    <name type="ordered locus">mlr5905</name>
</gene>
<name>NIFH_RHILO</name>
<sequence>MSGLRQIAFYGKGGIGKSTTSQNTLAALVDLGQKILIVGCDPKADSTRLILNAKAQDTVLHLAAQEGSVEDLELQDVLKIGYKDIKCVESGGPEPGVGCAGRGVITSINFLEENGAYDNVDYVSYDVLGDVVCGGFAMPIRENKAQEIYIVMSGEMMALYAANNIAKGILKYAHSGGVRLGGLICNERQTDRELDLSEALAARLNSKLIHFVPRDNIVQHAELRKMTVIQYAPDSKQAGEYRALAEKIHGNSGQGTIPTPITMEELEDMLLDFGIMKTDEQMLAELQAKEAKLAVAQ</sequence>
<protein>
    <recommendedName>
        <fullName evidence="1">Nitrogenase iron protein</fullName>
        <ecNumber evidence="1">1.18.6.1</ecNumber>
    </recommendedName>
    <alternativeName>
        <fullName evidence="1">Nitrogenase Fe protein</fullName>
    </alternativeName>
    <alternativeName>
        <fullName evidence="1">Nitrogenase component II</fullName>
    </alternativeName>
    <alternativeName>
        <fullName evidence="1">Nitrogenase reductase</fullName>
    </alternativeName>
</protein>
<reference key="1">
    <citation type="journal article" date="2000" name="DNA Res.">
        <title>Complete genome structure of the nitrogen-fixing symbiotic bacterium Mesorhizobium loti.</title>
        <authorList>
            <person name="Kaneko T."/>
            <person name="Nakamura Y."/>
            <person name="Sato S."/>
            <person name="Asamizu E."/>
            <person name="Kato T."/>
            <person name="Sasamoto S."/>
            <person name="Watanabe A."/>
            <person name="Idesawa K."/>
            <person name="Ishikawa A."/>
            <person name="Kawashima K."/>
            <person name="Kimura T."/>
            <person name="Kishida Y."/>
            <person name="Kiyokawa C."/>
            <person name="Kohara M."/>
            <person name="Matsumoto M."/>
            <person name="Matsuno A."/>
            <person name="Mochizuki Y."/>
            <person name="Nakayama S."/>
            <person name="Nakazaki N."/>
            <person name="Shimpo S."/>
            <person name="Sugimoto M."/>
            <person name="Takeuchi C."/>
            <person name="Yamada M."/>
            <person name="Tabata S."/>
        </authorList>
    </citation>
    <scope>NUCLEOTIDE SEQUENCE [LARGE SCALE GENOMIC DNA]</scope>
    <source>
        <strain>LMG 29417 / CECT 9101 / MAFF 303099</strain>
    </source>
</reference>
<organism>
    <name type="scientific">Mesorhizobium japonicum (strain LMG 29417 / CECT 9101 / MAFF 303099)</name>
    <name type="common">Mesorhizobium loti (strain MAFF 303099)</name>
    <dbReference type="NCBI Taxonomy" id="266835"/>
    <lineage>
        <taxon>Bacteria</taxon>
        <taxon>Pseudomonadati</taxon>
        <taxon>Pseudomonadota</taxon>
        <taxon>Alphaproteobacteria</taxon>
        <taxon>Hyphomicrobiales</taxon>
        <taxon>Phyllobacteriaceae</taxon>
        <taxon>Mesorhizobium</taxon>
    </lineage>
</organism>
<comment type="function">
    <text evidence="1">The key enzymatic reactions in nitrogen fixation are catalyzed by the nitrogenase complex, which has 2 components: the iron protein and the molybdenum-iron protein.</text>
</comment>
<comment type="catalytic activity">
    <reaction evidence="1">
        <text>N2 + 8 reduced [2Fe-2S]-[ferredoxin] + 16 ATP + 16 H2O = H2 + 8 oxidized [2Fe-2S]-[ferredoxin] + 2 NH4(+) + 16 ADP + 16 phosphate + 6 H(+)</text>
        <dbReference type="Rhea" id="RHEA:21448"/>
        <dbReference type="Rhea" id="RHEA-COMP:10000"/>
        <dbReference type="Rhea" id="RHEA-COMP:10001"/>
        <dbReference type="ChEBI" id="CHEBI:15377"/>
        <dbReference type="ChEBI" id="CHEBI:15378"/>
        <dbReference type="ChEBI" id="CHEBI:17997"/>
        <dbReference type="ChEBI" id="CHEBI:18276"/>
        <dbReference type="ChEBI" id="CHEBI:28938"/>
        <dbReference type="ChEBI" id="CHEBI:30616"/>
        <dbReference type="ChEBI" id="CHEBI:33737"/>
        <dbReference type="ChEBI" id="CHEBI:33738"/>
        <dbReference type="ChEBI" id="CHEBI:43474"/>
        <dbReference type="ChEBI" id="CHEBI:456216"/>
        <dbReference type="EC" id="1.18.6.1"/>
    </reaction>
</comment>
<comment type="cofactor">
    <cofactor evidence="1">
        <name>[4Fe-4S] cluster</name>
        <dbReference type="ChEBI" id="CHEBI:49883"/>
    </cofactor>
    <text evidence="1">Binds 1 [4Fe-4S] cluster per dimer.</text>
</comment>
<comment type="subunit">
    <text evidence="1">Homodimer.</text>
</comment>
<comment type="PTM">
    <text evidence="1">The reversible ADP-ribosylation of Arg-102 inactivates the nitrogenase reductase and regulates nitrogenase activity.</text>
</comment>
<comment type="similarity">
    <text evidence="1">Belongs to the NifH/BchL/ChlL family.</text>
</comment>
<accession>Q98AP7</accession>
<feature type="chain" id="PRO_0000139523" description="Nitrogenase iron protein">
    <location>
        <begin position="1"/>
        <end position="297"/>
    </location>
</feature>
<feature type="binding site" evidence="1">
    <location>
        <begin position="11"/>
        <end position="18"/>
    </location>
    <ligand>
        <name>ATP</name>
        <dbReference type="ChEBI" id="CHEBI:30616"/>
    </ligand>
</feature>
<feature type="binding site" evidence="1">
    <location>
        <position position="99"/>
    </location>
    <ligand>
        <name>[4Fe-4S] cluster</name>
        <dbReference type="ChEBI" id="CHEBI:49883"/>
        <note>ligand shared between dimeric partners</note>
    </ligand>
</feature>
<feature type="binding site" evidence="1">
    <location>
        <position position="133"/>
    </location>
    <ligand>
        <name>[4Fe-4S] cluster</name>
        <dbReference type="ChEBI" id="CHEBI:49883"/>
        <note>ligand shared between dimeric partners</note>
    </ligand>
</feature>
<feature type="modified residue" description="ADP-ribosylarginine; by dinitrogenase reductase ADP-ribosyltransferase" evidence="1">
    <location>
        <position position="102"/>
    </location>
</feature>
<keyword id="KW-0004">4Fe-4S</keyword>
<keyword id="KW-0013">ADP-ribosylation</keyword>
<keyword id="KW-0067">ATP-binding</keyword>
<keyword id="KW-0408">Iron</keyword>
<keyword id="KW-0411">Iron-sulfur</keyword>
<keyword id="KW-0479">Metal-binding</keyword>
<keyword id="KW-0535">Nitrogen fixation</keyword>
<keyword id="KW-0547">Nucleotide-binding</keyword>
<keyword id="KW-0560">Oxidoreductase</keyword>
<evidence type="ECO:0000255" key="1">
    <source>
        <dbReference type="HAMAP-Rule" id="MF_00533"/>
    </source>
</evidence>